<protein>
    <recommendedName>
        <fullName evidence="1">Glutamate-1-semialdehyde 2,1-aminomutase 2</fullName>
        <shortName evidence="1">GSA 2</shortName>
        <ecNumber evidence="1">5.4.3.8</ecNumber>
    </recommendedName>
    <alternativeName>
        <fullName evidence="1">Glutamate-1-semialdehyde aminotransferase 2</fullName>
        <shortName evidence="1">GSA-AT 2</shortName>
    </alternativeName>
</protein>
<reference key="1">
    <citation type="submission" date="2003-10" db="EMBL/GenBank/DDBJ databases">
        <title>The complete genome sequence of the alkaliphilic Bacillus clausii KSM-K16.</title>
        <authorList>
            <person name="Takaki Y."/>
            <person name="Kageyama Y."/>
            <person name="Shimamura S."/>
            <person name="Suzuki H."/>
            <person name="Nishi S."/>
            <person name="Hatada Y."/>
            <person name="Kawai S."/>
            <person name="Ito S."/>
            <person name="Horikoshi K."/>
        </authorList>
    </citation>
    <scope>NUCLEOTIDE SEQUENCE [LARGE SCALE GENOMIC DNA]</scope>
    <source>
        <strain>KSM-K16</strain>
    </source>
</reference>
<comment type="catalytic activity">
    <reaction evidence="1">
        <text>(S)-4-amino-5-oxopentanoate = 5-aminolevulinate</text>
        <dbReference type="Rhea" id="RHEA:14265"/>
        <dbReference type="ChEBI" id="CHEBI:57501"/>
        <dbReference type="ChEBI" id="CHEBI:356416"/>
        <dbReference type="EC" id="5.4.3.8"/>
    </reaction>
</comment>
<comment type="cofactor">
    <cofactor evidence="1">
        <name>pyridoxal 5'-phosphate</name>
        <dbReference type="ChEBI" id="CHEBI:597326"/>
    </cofactor>
</comment>
<comment type="pathway">
    <text evidence="1">Porphyrin-containing compound metabolism; protoporphyrin-IX biosynthesis; 5-aminolevulinate from L-glutamyl-tRNA(Glu): step 2/2.</text>
</comment>
<comment type="subunit">
    <text evidence="1">Homodimer.</text>
</comment>
<comment type="subcellular location">
    <subcellularLocation>
        <location evidence="1">Cytoplasm</location>
    </subcellularLocation>
</comment>
<comment type="similarity">
    <text evidence="1">Belongs to the class-III pyridoxal-phosphate-dependent aminotransferase family. HemL subfamily.</text>
</comment>
<accession>Q5WEP8</accession>
<keyword id="KW-0963">Cytoplasm</keyword>
<keyword id="KW-0413">Isomerase</keyword>
<keyword id="KW-0627">Porphyrin biosynthesis</keyword>
<keyword id="KW-0663">Pyridoxal phosphate</keyword>
<keyword id="KW-1185">Reference proteome</keyword>
<name>GSA2_SHOC1</name>
<organism>
    <name type="scientific">Shouchella clausii (strain KSM-K16)</name>
    <name type="common">Alkalihalobacillus clausii</name>
    <dbReference type="NCBI Taxonomy" id="66692"/>
    <lineage>
        <taxon>Bacteria</taxon>
        <taxon>Bacillati</taxon>
        <taxon>Bacillota</taxon>
        <taxon>Bacilli</taxon>
        <taxon>Bacillales</taxon>
        <taxon>Bacillaceae</taxon>
        <taxon>Shouchella</taxon>
    </lineage>
</organism>
<dbReference type="EC" id="5.4.3.8" evidence="1"/>
<dbReference type="EMBL" id="AP006627">
    <property type="protein sequence ID" value="BAD65162.1"/>
    <property type="molecule type" value="Genomic_DNA"/>
</dbReference>
<dbReference type="SMR" id="Q5WEP8"/>
<dbReference type="STRING" id="66692.ABC2627"/>
<dbReference type="KEGG" id="bcl:ABC2627"/>
<dbReference type="eggNOG" id="COG0001">
    <property type="taxonomic scope" value="Bacteria"/>
</dbReference>
<dbReference type="HOGENOM" id="CLU_016922_1_5_9"/>
<dbReference type="OrthoDB" id="9807885at2"/>
<dbReference type="UniPathway" id="UPA00251">
    <property type="reaction ID" value="UER00317"/>
</dbReference>
<dbReference type="Proteomes" id="UP000001168">
    <property type="component" value="Chromosome"/>
</dbReference>
<dbReference type="GO" id="GO:0005737">
    <property type="term" value="C:cytoplasm"/>
    <property type="evidence" value="ECO:0007669"/>
    <property type="project" value="UniProtKB-SubCell"/>
</dbReference>
<dbReference type="GO" id="GO:0042286">
    <property type="term" value="F:glutamate-1-semialdehyde 2,1-aminomutase activity"/>
    <property type="evidence" value="ECO:0007669"/>
    <property type="project" value="UniProtKB-UniRule"/>
</dbReference>
<dbReference type="GO" id="GO:0030170">
    <property type="term" value="F:pyridoxal phosphate binding"/>
    <property type="evidence" value="ECO:0007669"/>
    <property type="project" value="InterPro"/>
</dbReference>
<dbReference type="GO" id="GO:0008483">
    <property type="term" value="F:transaminase activity"/>
    <property type="evidence" value="ECO:0007669"/>
    <property type="project" value="InterPro"/>
</dbReference>
<dbReference type="GO" id="GO:0006782">
    <property type="term" value="P:protoporphyrinogen IX biosynthetic process"/>
    <property type="evidence" value="ECO:0007669"/>
    <property type="project" value="UniProtKB-UniRule"/>
</dbReference>
<dbReference type="CDD" id="cd00610">
    <property type="entry name" value="OAT_like"/>
    <property type="match status" value="1"/>
</dbReference>
<dbReference type="FunFam" id="3.40.640.10:FF:000021">
    <property type="entry name" value="Glutamate-1-semialdehyde 2,1-aminomutase"/>
    <property type="match status" value="1"/>
</dbReference>
<dbReference type="Gene3D" id="3.90.1150.10">
    <property type="entry name" value="Aspartate Aminotransferase, domain 1"/>
    <property type="match status" value="1"/>
</dbReference>
<dbReference type="Gene3D" id="3.40.640.10">
    <property type="entry name" value="Type I PLP-dependent aspartate aminotransferase-like (Major domain)"/>
    <property type="match status" value="1"/>
</dbReference>
<dbReference type="HAMAP" id="MF_00375">
    <property type="entry name" value="HemL_aminotrans_3"/>
    <property type="match status" value="1"/>
</dbReference>
<dbReference type="InterPro" id="IPR004639">
    <property type="entry name" value="4pyrrol_synth_GluAld_NH2Trfase"/>
</dbReference>
<dbReference type="InterPro" id="IPR005814">
    <property type="entry name" value="Aminotrans_3"/>
</dbReference>
<dbReference type="InterPro" id="IPR049704">
    <property type="entry name" value="Aminotrans_3_PPA_site"/>
</dbReference>
<dbReference type="InterPro" id="IPR015424">
    <property type="entry name" value="PyrdxlP-dep_Trfase"/>
</dbReference>
<dbReference type="InterPro" id="IPR015421">
    <property type="entry name" value="PyrdxlP-dep_Trfase_major"/>
</dbReference>
<dbReference type="InterPro" id="IPR015422">
    <property type="entry name" value="PyrdxlP-dep_Trfase_small"/>
</dbReference>
<dbReference type="NCBIfam" id="TIGR00713">
    <property type="entry name" value="hemL"/>
    <property type="match status" value="1"/>
</dbReference>
<dbReference type="NCBIfam" id="NF000818">
    <property type="entry name" value="PRK00062.1"/>
    <property type="match status" value="1"/>
</dbReference>
<dbReference type="PANTHER" id="PTHR43713">
    <property type="entry name" value="GLUTAMATE-1-SEMIALDEHYDE 2,1-AMINOMUTASE"/>
    <property type="match status" value="1"/>
</dbReference>
<dbReference type="PANTHER" id="PTHR43713:SF3">
    <property type="entry name" value="GLUTAMATE-1-SEMIALDEHYDE 2,1-AMINOMUTASE 1, CHLOROPLASTIC-RELATED"/>
    <property type="match status" value="1"/>
</dbReference>
<dbReference type="Pfam" id="PF00202">
    <property type="entry name" value="Aminotran_3"/>
    <property type="match status" value="1"/>
</dbReference>
<dbReference type="SUPFAM" id="SSF53383">
    <property type="entry name" value="PLP-dependent transferases"/>
    <property type="match status" value="1"/>
</dbReference>
<dbReference type="PROSITE" id="PS00600">
    <property type="entry name" value="AA_TRANSFER_CLASS_3"/>
    <property type="match status" value="1"/>
</dbReference>
<proteinExistence type="inferred from homology"/>
<gene>
    <name evidence="1" type="primary">hemL2</name>
    <name type="ordered locus">ABC2627</name>
</gene>
<sequence>MGNWTKSIEAFKEAQPLMPGGVNSPVRAFKSVGMNPVYMKEGKGAKIKDIDGNEYIDYVLSWGPLILGHANDVVVEELKKATELGTSFGAPHEYETRLAKLVIERVPSIDVVRMVNSGTEATMSALRLARGYTGRNKILKFVGCYHGHGDSLLIKAGSGVATLGLPDSPGVPESVAQNTLTVHYNDVESVRYVFETFGDDLAAVIVEPVAGNMGVVPPEPGFLETLRTWTEENGTLLIFDEVMTGFRVGYTCAQGEFGVTPDLTCLGKVIGGGLPVGAFGGKREIMEQIAPSGPIYQAGTLSGNPLAMTAGYYTLSQLTKADYSEFARKAERLEAGLSAAAKQHGIPHSINRAGSMIGLFFTDERVYNFEKAQTSDLDLFAAYFRGMLAEGISLAPSQFEGLFLSTAHSNEDIEATIAAAERVFQAIATK</sequence>
<evidence type="ECO:0000255" key="1">
    <source>
        <dbReference type="HAMAP-Rule" id="MF_00375"/>
    </source>
</evidence>
<feature type="chain" id="PRO_0000243545" description="Glutamate-1-semialdehyde 2,1-aminomutase 2">
    <location>
        <begin position="1"/>
        <end position="430"/>
    </location>
</feature>
<feature type="modified residue" description="N6-(pyridoxal phosphate)lysine" evidence="1">
    <location>
        <position position="268"/>
    </location>
</feature>